<reference key="1">
    <citation type="journal article" date="2009" name="PLoS ONE">
        <title>Salmonella paratyphi C: genetic divergence from Salmonella choleraesuis and pathogenic convergence with Salmonella typhi.</title>
        <authorList>
            <person name="Liu W.-Q."/>
            <person name="Feng Y."/>
            <person name="Wang Y."/>
            <person name="Zou Q.-H."/>
            <person name="Chen F."/>
            <person name="Guo J.-T."/>
            <person name="Peng Y.-H."/>
            <person name="Jin Y."/>
            <person name="Li Y.-G."/>
            <person name="Hu S.-N."/>
            <person name="Johnston R.N."/>
            <person name="Liu G.-R."/>
            <person name="Liu S.-L."/>
        </authorList>
    </citation>
    <scope>NUCLEOTIDE SEQUENCE [LARGE SCALE GENOMIC DNA]</scope>
    <source>
        <strain>RKS4594</strain>
    </source>
</reference>
<comment type="catalytic activity">
    <reaction evidence="1">
        <text>(2R)-2-phosphoglycerate = (2R)-3-phosphoglycerate</text>
        <dbReference type="Rhea" id="RHEA:15901"/>
        <dbReference type="ChEBI" id="CHEBI:58272"/>
        <dbReference type="ChEBI" id="CHEBI:58289"/>
    </reaction>
</comment>
<comment type="pathway">
    <text evidence="1">Carbohydrate degradation; glycolysis; pyruvate from D-glyceraldehyde 3-phosphate: step 3/5.</text>
</comment>
<comment type="similarity">
    <text evidence="1">Belongs to the phosphoglycerate mutase family. GpmB subfamily.</text>
</comment>
<organism>
    <name type="scientific">Salmonella paratyphi C (strain RKS4594)</name>
    <dbReference type="NCBI Taxonomy" id="476213"/>
    <lineage>
        <taxon>Bacteria</taxon>
        <taxon>Pseudomonadati</taxon>
        <taxon>Pseudomonadota</taxon>
        <taxon>Gammaproteobacteria</taxon>
        <taxon>Enterobacterales</taxon>
        <taxon>Enterobacteriaceae</taxon>
        <taxon>Salmonella</taxon>
    </lineage>
</organism>
<name>GPMB_SALPC</name>
<proteinExistence type="inferred from homology"/>
<dbReference type="EC" id="5.4.2.-" evidence="1"/>
<dbReference type="EMBL" id="CP000857">
    <property type="protein sequence ID" value="ACN48761.1"/>
    <property type="molecule type" value="Genomic_DNA"/>
</dbReference>
<dbReference type="RefSeq" id="WP_000942366.1">
    <property type="nucleotide sequence ID" value="NC_012125.1"/>
</dbReference>
<dbReference type="SMR" id="C0Q8F5"/>
<dbReference type="KEGG" id="sei:SPC_4718"/>
<dbReference type="HOGENOM" id="CLU_033323_9_5_6"/>
<dbReference type="UniPathway" id="UPA00109">
    <property type="reaction ID" value="UER00186"/>
</dbReference>
<dbReference type="Proteomes" id="UP000001599">
    <property type="component" value="Chromosome"/>
</dbReference>
<dbReference type="GO" id="GO:0005737">
    <property type="term" value="C:cytoplasm"/>
    <property type="evidence" value="ECO:0007669"/>
    <property type="project" value="TreeGrafter"/>
</dbReference>
<dbReference type="GO" id="GO:0016791">
    <property type="term" value="F:phosphatase activity"/>
    <property type="evidence" value="ECO:0007669"/>
    <property type="project" value="TreeGrafter"/>
</dbReference>
<dbReference type="GO" id="GO:0004619">
    <property type="term" value="F:phosphoglycerate mutase activity"/>
    <property type="evidence" value="ECO:0007669"/>
    <property type="project" value="UniProtKB-UniRule"/>
</dbReference>
<dbReference type="GO" id="GO:0006096">
    <property type="term" value="P:glycolytic process"/>
    <property type="evidence" value="ECO:0007669"/>
    <property type="project" value="UniProtKB-UniRule"/>
</dbReference>
<dbReference type="CDD" id="cd07067">
    <property type="entry name" value="HP_PGM_like"/>
    <property type="match status" value="1"/>
</dbReference>
<dbReference type="Gene3D" id="3.40.50.1240">
    <property type="entry name" value="Phosphoglycerate mutase-like"/>
    <property type="match status" value="1"/>
</dbReference>
<dbReference type="HAMAP" id="MF_01040">
    <property type="entry name" value="PGAM_GpmB"/>
    <property type="match status" value="1"/>
</dbReference>
<dbReference type="InterPro" id="IPR013078">
    <property type="entry name" value="His_Pase_superF_clade-1"/>
</dbReference>
<dbReference type="InterPro" id="IPR029033">
    <property type="entry name" value="His_PPase_superfam"/>
</dbReference>
<dbReference type="InterPro" id="IPR001345">
    <property type="entry name" value="PG/BPGM_mutase_AS"/>
</dbReference>
<dbReference type="InterPro" id="IPR050275">
    <property type="entry name" value="PGM_Phosphatase"/>
</dbReference>
<dbReference type="InterPro" id="IPR023086">
    <property type="entry name" value="Phosphoglycerate_mutase_GpmB"/>
</dbReference>
<dbReference type="NCBIfam" id="NF002901">
    <property type="entry name" value="PRK03482.1"/>
    <property type="match status" value="1"/>
</dbReference>
<dbReference type="PANTHER" id="PTHR48100">
    <property type="entry name" value="BROAD-SPECIFICITY PHOSPHATASE YOR283W-RELATED"/>
    <property type="match status" value="1"/>
</dbReference>
<dbReference type="PANTHER" id="PTHR48100:SF1">
    <property type="entry name" value="HISTIDINE PHOSPHATASE FAMILY PROTEIN-RELATED"/>
    <property type="match status" value="1"/>
</dbReference>
<dbReference type="Pfam" id="PF00300">
    <property type="entry name" value="His_Phos_1"/>
    <property type="match status" value="1"/>
</dbReference>
<dbReference type="SMART" id="SM00855">
    <property type="entry name" value="PGAM"/>
    <property type="match status" value="1"/>
</dbReference>
<dbReference type="SUPFAM" id="SSF53254">
    <property type="entry name" value="Phosphoglycerate mutase-like"/>
    <property type="match status" value="1"/>
</dbReference>
<dbReference type="PROSITE" id="PS00175">
    <property type="entry name" value="PG_MUTASE"/>
    <property type="match status" value="1"/>
</dbReference>
<evidence type="ECO:0000255" key="1">
    <source>
        <dbReference type="HAMAP-Rule" id="MF_01040"/>
    </source>
</evidence>
<feature type="chain" id="PRO_1000149540" description="Probable phosphoglycerate mutase GpmB">
    <location>
        <begin position="1"/>
        <end position="215"/>
    </location>
</feature>
<feature type="active site" description="Tele-phosphohistidine intermediate" evidence="1">
    <location>
        <position position="9"/>
    </location>
</feature>
<feature type="active site" description="Proton donor/acceptor" evidence="1">
    <location>
        <position position="82"/>
    </location>
</feature>
<feature type="binding site" evidence="1">
    <location>
        <begin position="8"/>
        <end position="15"/>
    </location>
    <ligand>
        <name>substrate</name>
    </ligand>
</feature>
<feature type="binding site" evidence="1">
    <location>
        <begin position="21"/>
        <end position="22"/>
    </location>
    <ligand>
        <name>substrate</name>
    </ligand>
</feature>
<feature type="binding site" evidence="1">
    <location>
        <position position="58"/>
    </location>
    <ligand>
        <name>substrate</name>
    </ligand>
</feature>
<feature type="binding site" evidence="1">
    <location>
        <position position="60"/>
    </location>
    <ligand>
        <name>substrate</name>
    </ligand>
</feature>
<feature type="binding site" evidence="1">
    <location>
        <begin position="82"/>
        <end position="85"/>
    </location>
    <ligand>
        <name>substrate</name>
    </ligand>
</feature>
<feature type="binding site" evidence="1">
    <location>
        <begin position="104"/>
        <end position="105"/>
    </location>
    <ligand>
        <name>substrate</name>
    </ligand>
</feature>
<feature type="binding site" evidence="1">
    <location>
        <begin position="151"/>
        <end position="152"/>
    </location>
    <ligand>
        <name>substrate</name>
    </ligand>
</feature>
<feature type="site" description="Transition state stabilizer" evidence="1">
    <location>
        <position position="150"/>
    </location>
</feature>
<accession>C0Q8F5</accession>
<sequence length="215" mass="23842">MLQVYLVRHGETQWNAERRIQGQSDSPLTAKGEQQAMQVGERARSLGSTHIISSDLGRTKRTAEIIAQACGCDITFDSRLRELDMGVLEKRQIDSLTEEEEGWRRQLVNGTQDGRIPGGESMQELSDRVHAALASCLELPQGSRPLLVSHGIALGCLVSTILGLPAWAERRLRLRNCSISRIDYQESQWLASGWVVETAGDVSHLDAPALDELQR</sequence>
<keyword id="KW-0324">Glycolysis</keyword>
<keyword id="KW-0413">Isomerase</keyword>
<gene>
    <name evidence="1" type="primary">gpmB</name>
    <name type="ordered locus">SPC_4718</name>
</gene>
<protein>
    <recommendedName>
        <fullName evidence="1">Probable phosphoglycerate mutase GpmB</fullName>
        <ecNumber evidence="1">5.4.2.-</ecNumber>
    </recommendedName>
    <alternativeName>
        <fullName evidence="1">PGAM</fullName>
    </alternativeName>
    <alternativeName>
        <fullName evidence="1">Phosphoglyceromutase</fullName>
    </alternativeName>
</protein>